<protein>
    <recommendedName>
        <fullName>HMG-Y-related protein A</fullName>
        <shortName>AtHMGA</shortName>
    </recommendedName>
    <alternativeName>
        <fullName>High mobility group A protein</fullName>
    </alternativeName>
</protein>
<sequence length="204" mass="22011">MAFDLHHGSASDTHSSELPSFSLPPYPQMIMEAIESLNDKNGCNKTTIAKHIESTQQTLPPSHMTLLSYHLNQMKKTGQLIMVKNNYMKPDPDAPPKRGRGRPPKQKTQAESDAAAAAVVAATVVSTDPPRSRGRPPKPKDPSEPPQEKVITGSGRPRGRPPKRPRTDSETVAAPEPAAQATGERRGRGRPPKVKPTVVAPVGC</sequence>
<gene>
    <name type="primary">HMGA</name>
    <name evidence="9" type="ordered locus">At1g14900</name>
    <name evidence="8" type="ORF">F10B6.31</name>
</gene>
<accession>Q43386</accession>
<accession>P92954</accession>
<accession>Q8LGC1</accession>
<reference key="1">
    <citation type="journal article" date="1997" name="Plant Mol. Biol.">
        <title>Chromosomal location and expression of the single-copy gene encoding high-mobility-group protein HMG-I/Y in Arabidopsis thaliana.</title>
        <authorList>
            <person name="Gupta R."/>
            <person name="Webster C.I."/>
            <person name="Walker A.R."/>
            <person name="Gray J.C."/>
        </authorList>
    </citation>
    <scope>NUCLEOTIDE SEQUENCE [GENOMIC DNA / MRNA] (ISOFORM 1)</scope>
    <scope>TISSUE SPECIFICITY</scope>
    <source>
        <strain>cv. Columbia</strain>
        <strain>cv. Landsberg erecta</strain>
        <tissue>Seedling</tissue>
    </source>
</reference>
<reference key="2">
    <citation type="submission" date="1998-01" db="EMBL/GenBank/DDBJ databases">
        <title>Analysis of an HMG gene from Arabidopsis.</title>
        <authorList>
            <person name="Ascenzi R."/>
            <person name="Gantt J.S."/>
        </authorList>
    </citation>
    <scope>NUCLEOTIDE SEQUENCE [GENOMIC DNA]</scope>
    <source>
        <strain>cv. Columbia</strain>
    </source>
</reference>
<reference key="3">
    <citation type="journal article" date="2000" name="Nature">
        <title>Sequence and analysis of chromosome 1 of the plant Arabidopsis thaliana.</title>
        <authorList>
            <person name="Theologis A."/>
            <person name="Ecker J.R."/>
            <person name="Palm C.J."/>
            <person name="Federspiel N.A."/>
            <person name="Kaul S."/>
            <person name="White O."/>
            <person name="Alonso J."/>
            <person name="Altafi H."/>
            <person name="Araujo R."/>
            <person name="Bowman C.L."/>
            <person name="Brooks S.Y."/>
            <person name="Buehler E."/>
            <person name="Chan A."/>
            <person name="Chao Q."/>
            <person name="Chen H."/>
            <person name="Cheuk R.F."/>
            <person name="Chin C.W."/>
            <person name="Chung M.K."/>
            <person name="Conn L."/>
            <person name="Conway A.B."/>
            <person name="Conway A.R."/>
            <person name="Creasy T.H."/>
            <person name="Dewar K."/>
            <person name="Dunn P."/>
            <person name="Etgu P."/>
            <person name="Feldblyum T.V."/>
            <person name="Feng J.-D."/>
            <person name="Fong B."/>
            <person name="Fujii C.Y."/>
            <person name="Gill J.E."/>
            <person name="Goldsmith A.D."/>
            <person name="Haas B."/>
            <person name="Hansen N.F."/>
            <person name="Hughes B."/>
            <person name="Huizar L."/>
            <person name="Hunter J.L."/>
            <person name="Jenkins J."/>
            <person name="Johnson-Hopson C."/>
            <person name="Khan S."/>
            <person name="Khaykin E."/>
            <person name="Kim C.J."/>
            <person name="Koo H.L."/>
            <person name="Kremenetskaia I."/>
            <person name="Kurtz D.B."/>
            <person name="Kwan A."/>
            <person name="Lam B."/>
            <person name="Langin-Hooper S."/>
            <person name="Lee A."/>
            <person name="Lee J.M."/>
            <person name="Lenz C.A."/>
            <person name="Li J.H."/>
            <person name="Li Y.-P."/>
            <person name="Lin X."/>
            <person name="Liu S.X."/>
            <person name="Liu Z.A."/>
            <person name="Luros J.S."/>
            <person name="Maiti R."/>
            <person name="Marziali A."/>
            <person name="Militscher J."/>
            <person name="Miranda M."/>
            <person name="Nguyen M."/>
            <person name="Nierman W.C."/>
            <person name="Osborne B.I."/>
            <person name="Pai G."/>
            <person name="Peterson J."/>
            <person name="Pham P.K."/>
            <person name="Rizzo M."/>
            <person name="Rooney T."/>
            <person name="Rowley D."/>
            <person name="Sakano H."/>
            <person name="Salzberg S.L."/>
            <person name="Schwartz J.R."/>
            <person name="Shinn P."/>
            <person name="Southwick A.M."/>
            <person name="Sun H."/>
            <person name="Tallon L.J."/>
            <person name="Tambunga G."/>
            <person name="Toriumi M.J."/>
            <person name="Town C.D."/>
            <person name="Utterback T."/>
            <person name="Van Aken S."/>
            <person name="Vaysberg M."/>
            <person name="Vysotskaia V.S."/>
            <person name="Walker M."/>
            <person name="Wu D."/>
            <person name="Yu G."/>
            <person name="Fraser C.M."/>
            <person name="Venter J.C."/>
            <person name="Davis R.W."/>
        </authorList>
    </citation>
    <scope>NUCLEOTIDE SEQUENCE [LARGE SCALE GENOMIC DNA]</scope>
    <source>
        <strain>cv. Columbia</strain>
    </source>
</reference>
<reference key="4">
    <citation type="journal article" date="2017" name="Plant J.">
        <title>Araport11: a complete reannotation of the Arabidopsis thaliana reference genome.</title>
        <authorList>
            <person name="Cheng C.Y."/>
            <person name="Krishnakumar V."/>
            <person name="Chan A.P."/>
            <person name="Thibaud-Nissen F."/>
            <person name="Schobel S."/>
            <person name="Town C.D."/>
        </authorList>
    </citation>
    <scope>GENOME REANNOTATION</scope>
    <source>
        <strain>cv. Columbia</strain>
    </source>
</reference>
<reference key="5">
    <citation type="journal article" date="2003" name="Science">
        <title>Empirical analysis of transcriptional activity in the Arabidopsis genome.</title>
        <authorList>
            <person name="Yamada K."/>
            <person name="Lim J."/>
            <person name="Dale J.M."/>
            <person name="Chen H."/>
            <person name="Shinn P."/>
            <person name="Palm C.J."/>
            <person name="Southwick A.M."/>
            <person name="Wu H.C."/>
            <person name="Kim C.J."/>
            <person name="Nguyen M."/>
            <person name="Pham P.K."/>
            <person name="Cheuk R.F."/>
            <person name="Karlin-Newmann G."/>
            <person name="Liu S.X."/>
            <person name="Lam B."/>
            <person name="Sakano H."/>
            <person name="Wu T."/>
            <person name="Yu G."/>
            <person name="Miranda M."/>
            <person name="Quach H.L."/>
            <person name="Tripp M."/>
            <person name="Chang C.H."/>
            <person name="Lee J.M."/>
            <person name="Toriumi M.J."/>
            <person name="Chan M.M."/>
            <person name="Tang C.C."/>
            <person name="Onodera C.S."/>
            <person name="Deng J.M."/>
            <person name="Akiyama K."/>
            <person name="Ansari Y."/>
            <person name="Arakawa T."/>
            <person name="Banh J."/>
            <person name="Banno F."/>
            <person name="Bowser L."/>
            <person name="Brooks S.Y."/>
            <person name="Carninci P."/>
            <person name="Chao Q."/>
            <person name="Choy N."/>
            <person name="Enju A."/>
            <person name="Goldsmith A.D."/>
            <person name="Gurjal M."/>
            <person name="Hansen N.F."/>
            <person name="Hayashizaki Y."/>
            <person name="Johnson-Hopson C."/>
            <person name="Hsuan V.W."/>
            <person name="Iida K."/>
            <person name="Karnes M."/>
            <person name="Khan S."/>
            <person name="Koesema E."/>
            <person name="Ishida J."/>
            <person name="Jiang P.X."/>
            <person name="Jones T."/>
            <person name="Kawai J."/>
            <person name="Kamiya A."/>
            <person name="Meyers C."/>
            <person name="Nakajima M."/>
            <person name="Narusaka M."/>
            <person name="Seki M."/>
            <person name="Sakurai T."/>
            <person name="Satou M."/>
            <person name="Tamse R."/>
            <person name="Vaysberg M."/>
            <person name="Wallender E.K."/>
            <person name="Wong C."/>
            <person name="Yamamura Y."/>
            <person name="Yuan S."/>
            <person name="Shinozaki K."/>
            <person name="Davis R.W."/>
            <person name="Theologis A."/>
            <person name="Ecker J.R."/>
        </authorList>
    </citation>
    <scope>NUCLEOTIDE SEQUENCE [LARGE SCALE MRNA]</scope>
    <source>
        <strain>cv. Columbia</strain>
    </source>
</reference>
<reference key="6">
    <citation type="journal article" date="2009" name="DNA Res.">
        <title>Analysis of multiple occurrences of alternative splicing events in Arabidopsis thaliana using novel sequenced full-length cDNAs.</title>
        <authorList>
            <person name="Iida K."/>
            <person name="Fukami-Kobayashi K."/>
            <person name="Toyoda A."/>
            <person name="Sakaki Y."/>
            <person name="Kobayashi M."/>
            <person name="Seki M."/>
            <person name="Shinozaki K."/>
        </authorList>
    </citation>
    <scope>NUCLEOTIDE SEQUENCE [LARGE SCALE MRNA] (ISOFORMS 1 AND 2)</scope>
    <source>
        <strain>cv. Columbia</strain>
        <tissue>Rosette leaf</tissue>
    </source>
</reference>
<reference key="7">
    <citation type="submission" date="2002-03" db="EMBL/GenBank/DDBJ databases">
        <title>Full-length cDNA from Arabidopsis thaliana.</title>
        <authorList>
            <person name="Brover V.V."/>
            <person name="Troukhan M.E."/>
            <person name="Alexandrov N.A."/>
            <person name="Lu Y.-P."/>
            <person name="Flavell R.B."/>
            <person name="Feldmann K.A."/>
        </authorList>
    </citation>
    <scope>NUCLEOTIDE SEQUENCE [LARGE SCALE MRNA] (ISOFORM 1)</scope>
</reference>
<reference key="8">
    <citation type="journal article" date="2006" name="Plant Cell">
        <title>Arabidopsis chromatin-associated HMGA and HMGB use different nuclear targeting signals and display highly dynamic localization within the nucleus.</title>
        <authorList>
            <person name="Launholt D."/>
            <person name="Merkle T."/>
            <person name="Houben A."/>
            <person name="Schulz A."/>
            <person name="Grasser K.D."/>
        </authorList>
    </citation>
    <scope>FUNCTION</scope>
    <scope>MUTAGENESIS OF ARG-98 AND ARG-164</scope>
    <scope>SUBCELLULAR LOCATION</scope>
</reference>
<reference key="9">
    <citation type="journal article" date="2007" name="FEBS Lett.">
        <title>Overlapping expression patterns among the genes encoding Arabidopsis chromosomal high mobility group (HMG) proteins.</title>
        <authorList>
            <person name="Launholt D."/>
            <person name="Groenlund J.T."/>
            <person name="Nielsen H.K."/>
            <person name="Grasser K.D."/>
        </authorList>
    </citation>
    <scope>TISSUE SPECIFICITY</scope>
    <source>
        <strain>cv. Columbia</strain>
    </source>
</reference>
<keyword id="KW-0007">Acetylation</keyword>
<keyword id="KW-0025">Alternative splicing</keyword>
<keyword id="KW-0238">DNA-binding</keyword>
<keyword id="KW-0539">Nucleus</keyword>
<keyword id="KW-1185">Reference proteome</keyword>
<keyword id="KW-0677">Repeat</keyword>
<name>HMGYA_ARATH</name>
<feature type="chain" id="PRO_0000434725" description="HMG-Y-related protein A">
    <location>
        <begin position="1"/>
        <end position="204"/>
    </location>
</feature>
<feature type="domain" description="H15" evidence="2">
    <location>
        <begin position="22"/>
        <end position="91"/>
    </location>
</feature>
<feature type="DNA-binding region" description="A.T hook 1" evidence="7">
    <location>
        <begin position="97"/>
        <end position="105"/>
    </location>
</feature>
<feature type="DNA-binding region" description="A.T hook 2" evidence="7">
    <location>
        <begin position="130"/>
        <end position="138"/>
    </location>
</feature>
<feature type="DNA-binding region" description="A.T hook 3" evidence="7">
    <location>
        <begin position="155"/>
        <end position="163"/>
    </location>
</feature>
<feature type="DNA-binding region" description="A.T hook 4" evidence="7">
    <location>
        <begin position="183"/>
        <end position="193"/>
    </location>
</feature>
<feature type="region of interest" description="Disordered" evidence="3">
    <location>
        <begin position="1"/>
        <end position="23"/>
    </location>
</feature>
<feature type="region of interest" description="Disordered" evidence="3">
    <location>
        <begin position="86"/>
        <end position="204"/>
    </location>
</feature>
<feature type="short sequence motif" description="Nuclear localization signal 1 (NLS)" evidence="4">
    <location>
        <begin position="96"/>
        <end position="102"/>
    </location>
</feature>
<feature type="short sequence motif" description="Nuclear localization signal 2 (NLS)" evidence="4">
    <location>
        <begin position="162"/>
        <end position="166"/>
    </location>
</feature>
<feature type="compositionally biased region" description="Polar residues" evidence="3">
    <location>
        <begin position="10"/>
        <end position="19"/>
    </location>
</feature>
<feature type="compositionally biased region" description="Low complexity" evidence="3">
    <location>
        <begin position="114"/>
        <end position="129"/>
    </location>
</feature>
<feature type="compositionally biased region" description="Basic and acidic residues" evidence="3">
    <location>
        <begin position="138"/>
        <end position="147"/>
    </location>
</feature>
<feature type="compositionally biased region" description="Low complexity" evidence="3">
    <location>
        <begin position="195"/>
        <end position="204"/>
    </location>
</feature>
<feature type="splice variant" id="VSP_057977" description="In isoform 2.">
    <location>
        <begin position="1"/>
        <end position="28"/>
    </location>
</feature>
<feature type="mutagenesis site" description="Loss of the nuclear accumulation." evidence="4">
    <original>R</original>
    <variation>G</variation>
    <location>
        <position position="98"/>
    </location>
</feature>
<feature type="mutagenesis site" description="Loss of the nuclear accumulation." evidence="4">
    <original>R</original>
    <variation>G</variation>
    <location>
        <position position="164"/>
    </location>
</feature>
<feature type="sequence conflict" description="In Ref. 1; CAA71797." evidence="7" ref="1">
    <original>M</original>
    <variation>T</variation>
    <location>
        <position position="64"/>
    </location>
</feature>
<dbReference type="EMBL" id="Y10836">
    <property type="protein sequence ID" value="CAA71797.1"/>
    <property type="molecule type" value="Genomic_DNA"/>
</dbReference>
<dbReference type="EMBL" id="X99116">
    <property type="protein sequence ID" value="CAA67564.1"/>
    <property type="molecule type" value="mRNA"/>
</dbReference>
<dbReference type="EMBL" id="AF041253">
    <property type="protein sequence ID" value="AAB97739.1"/>
    <property type="molecule type" value="Genomic_DNA"/>
</dbReference>
<dbReference type="EMBL" id="AC006917">
    <property type="protein sequence ID" value="AAF79232.1"/>
    <property type="molecule type" value="Genomic_DNA"/>
</dbReference>
<dbReference type="EMBL" id="CP002684">
    <property type="protein sequence ID" value="AEE29240.1"/>
    <property type="molecule type" value="Genomic_DNA"/>
</dbReference>
<dbReference type="EMBL" id="BT004806">
    <property type="protein sequence ID" value="AAO44072.1"/>
    <property type="molecule type" value="mRNA"/>
</dbReference>
<dbReference type="EMBL" id="AK317240">
    <property type="protein sequence ID" value="BAH19921.1"/>
    <property type="molecule type" value="mRNA"/>
</dbReference>
<dbReference type="EMBL" id="AK319041">
    <property type="protein sequence ID" value="BAH57156.1"/>
    <property type="molecule type" value="mRNA"/>
</dbReference>
<dbReference type="EMBL" id="AY084355">
    <property type="protein sequence ID" value="AAM60937.1"/>
    <property type="status" value="ALT_INIT"/>
    <property type="molecule type" value="mRNA"/>
</dbReference>
<dbReference type="RefSeq" id="NP_172943.1">
    <molecule id="Q43386-1"/>
    <property type="nucleotide sequence ID" value="NM_101359.4"/>
</dbReference>
<dbReference type="SMR" id="Q43386"/>
<dbReference type="FunCoup" id="Q43386">
    <property type="interactions" value="150"/>
</dbReference>
<dbReference type="IntAct" id="Q43386">
    <property type="interactions" value="4"/>
</dbReference>
<dbReference type="STRING" id="3702.Q43386"/>
<dbReference type="iPTMnet" id="Q43386"/>
<dbReference type="PaxDb" id="3702-AT1G14900.1"/>
<dbReference type="ProteomicsDB" id="230260">
    <molecule id="Q43386-1"/>
</dbReference>
<dbReference type="EnsemblPlants" id="AT1G14900.1">
    <molecule id="Q43386-1"/>
    <property type="protein sequence ID" value="AT1G14900.1"/>
    <property type="gene ID" value="AT1G14900"/>
</dbReference>
<dbReference type="GeneID" id="838055"/>
<dbReference type="Gramene" id="AT1G14900.1">
    <molecule id="Q43386-1"/>
    <property type="protein sequence ID" value="AT1G14900.1"/>
    <property type="gene ID" value="AT1G14900"/>
</dbReference>
<dbReference type="KEGG" id="ath:AT1G14900"/>
<dbReference type="Araport" id="AT1G14900"/>
<dbReference type="TAIR" id="AT1G14900">
    <property type="gene designation" value="HMGA"/>
</dbReference>
<dbReference type="eggNOG" id="ENOG502RXFH">
    <property type="taxonomic scope" value="Eukaryota"/>
</dbReference>
<dbReference type="HOGENOM" id="CLU_078915_0_0_1"/>
<dbReference type="InParanoid" id="Q43386"/>
<dbReference type="OMA" id="VMIKNNY"/>
<dbReference type="CD-CODE" id="4299E36E">
    <property type="entry name" value="Nucleolus"/>
</dbReference>
<dbReference type="PRO" id="PR:Q43386"/>
<dbReference type="Proteomes" id="UP000006548">
    <property type="component" value="Chromosome 1"/>
</dbReference>
<dbReference type="ExpressionAtlas" id="Q43386">
    <property type="expression patterns" value="baseline and differential"/>
</dbReference>
<dbReference type="GO" id="GO:0005730">
    <property type="term" value="C:nucleolus"/>
    <property type="evidence" value="ECO:0000314"/>
    <property type="project" value="TAIR"/>
</dbReference>
<dbReference type="GO" id="GO:0000786">
    <property type="term" value="C:nucleosome"/>
    <property type="evidence" value="ECO:0007669"/>
    <property type="project" value="InterPro"/>
</dbReference>
<dbReference type="GO" id="GO:0005634">
    <property type="term" value="C:nucleus"/>
    <property type="evidence" value="ECO:0000314"/>
    <property type="project" value="UniProtKB"/>
</dbReference>
<dbReference type="GO" id="GO:0003677">
    <property type="term" value="F:DNA binding"/>
    <property type="evidence" value="ECO:0000314"/>
    <property type="project" value="TAIR"/>
</dbReference>
<dbReference type="GO" id="GO:0006334">
    <property type="term" value="P:nucleosome assembly"/>
    <property type="evidence" value="ECO:0007669"/>
    <property type="project" value="InterPro"/>
</dbReference>
<dbReference type="GO" id="GO:0006355">
    <property type="term" value="P:regulation of DNA-templated transcription"/>
    <property type="evidence" value="ECO:0007669"/>
    <property type="project" value="InterPro"/>
</dbReference>
<dbReference type="FunFam" id="1.10.10.10:FF:000537">
    <property type="entry name" value="HMG-Y-related protein A"/>
    <property type="match status" value="1"/>
</dbReference>
<dbReference type="Gene3D" id="1.10.10.10">
    <property type="entry name" value="Winged helix-like DNA-binding domain superfamily/Winged helix DNA-binding domain"/>
    <property type="match status" value="1"/>
</dbReference>
<dbReference type="InterPro" id="IPR017956">
    <property type="entry name" value="AT_hook_DNA-bd_motif"/>
</dbReference>
<dbReference type="InterPro" id="IPR005818">
    <property type="entry name" value="Histone_H1/H5_H15"/>
</dbReference>
<dbReference type="InterPro" id="IPR000116">
    <property type="entry name" value="HMGA"/>
</dbReference>
<dbReference type="InterPro" id="IPR036388">
    <property type="entry name" value="WH-like_DNA-bd_sf"/>
</dbReference>
<dbReference type="InterPro" id="IPR036390">
    <property type="entry name" value="WH_DNA-bd_sf"/>
</dbReference>
<dbReference type="PANTHER" id="PTHR11467">
    <property type="entry name" value="HISTONE H1"/>
    <property type="match status" value="1"/>
</dbReference>
<dbReference type="PANTHER" id="PTHR11467:SF103">
    <property type="entry name" value="HMG-Y-RELATED PROTEIN A"/>
    <property type="match status" value="1"/>
</dbReference>
<dbReference type="Pfam" id="PF00538">
    <property type="entry name" value="Linker_histone"/>
    <property type="match status" value="1"/>
</dbReference>
<dbReference type="PRINTS" id="PR00929">
    <property type="entry name" value="ATHOOK"/>
</dbReference>
<dbReference type="PRINTS" id="PR00930">
    <property type="entry name" value="HIGHMOBLTYIY"/>
</dbReference>
<dbReference type="SMART" id="SM00384">
    <property type="entry name" value="AT_hook"/>
    <property type="match status" value="4"/>
</dbReference>
<dbReference type="SMART" id="SM00526">
    <property type="entry name" value="H15"/>
    <property type="match status" value="1"/>
</dbReference>
<dbReference type="SUPFAM" id="SSF46785">
    <property type="entry name" value="Winged helix' DNA-binding domain"/>
    <property type="match status" value="1"/>
</dbReference>
<dbReference type="PROSITE" id="PS51504">
    <property type="entry name" value="H15"/>
    <property type="match status" value="1"/>
</dbReference>
<comment type="function">
    <text evidence="4">Binds A/T-rich DNA with a highly dynamic distribution into the nucleus.</text>
</comment>
<comment type="subcellular location">
    <subcellularLocation>
        <location evidence="2 4">Nucleus</location>
    </subcellularLocation>
    <subcellularLocation>
        <location evidence="1">Nucleus</location>
        <location evidence="1">Nucleolus</location>
    </subcellularLocation>
    <text evidence="4">Follows a highly dynamic speckled distribution pattern throughout the chromatin of interphase nuclei.</text>
</comment>
<comment type="alternative products">
    <event type="alternative splicing"/>
    <isoform>
        <id>Q43386-1</id>
        <name>1</name>
        <sequence type="displayed"/>
    </isoform>
    <isoform>
        <id>Q43386-2</id>
        <name>2</name>
        <sequence type="described" ref="VSP_057977"/>
    </isoform>
</comment>
<comment type="tissue specificity">
    <text evidence="5 6">Mostly expressed in flowers (especially in styles and filaments, and, at lower levels, in sepals and ovaries) and developing siliques, and, to a lower extent, in leaves, cotyledons, lateral roots and root tips.</text>
</comment>
<comment type="PTM">
    <text evidence="1">Acetylated.</text>
</comment>
<comment type="similarity">
    <text evidence="7">Belongs to the HMGA family.</text>
</comment>
<comment type="caution">
    <text evidence="7">Lacks phosphorylation sites present in ortholog HMGA proteins.</text>
</comment>
<comment type="sequence caution" evidence="7">
    <conflict type="erroneous initiation">
        <sequence resource="EMBL-CDS" id="AAM60937"/>
    </conflict>
    <text>Truncated N-terminus.</text>
</comment>
<organism evidence="10">
    <name type="scientific">Arabidopsis thaliana</name>
    <name type="common">Mouse-ear cress</name>
    <dbReference type="NCBI Taxonomy" id="3702"/>
    <lineage>
        <taxon>Eukaryota</taxon>
        <taxon>Viridiplantae</taxon>
        <taxon>Streptophyta</taxon>
        <taxon>Embryophyta</taxon>
        <taxon>Tracheophyta</taxon>
        <taxon>Spermatophyta</taxon>
        <taxon>Magnoliopsida</taxon>
        <taxon>eudicotyledons</taxon>
        <taxon>Gunneridae</taxon>
        <taxon>Pentapetalae</taxon>
        <taxon>rosids</taxon>
        <taxon>malvids</taxon>
        <taxon>Brassicales</taxon>
        <taxon>Brassicaceae</taxon>
        <taxon>Camelineae</taxon>
        <taxon>Arabidopsis</taxon>
    </lineage>
</organism>
<proteinExistence type="evidence at protein level"/>
<evidence type="ECO:0000250" key="1">
    <source>
        <dbReference type="UniProtKB" id="Q9FYS5"/>
    </source>
</evidence>
<evidence type="ECO:0000255" key="2">
    <source>
        <dbReference type="PROSITE-ProRule" id="PRU00837"/>
    </source>
</evidence>
<evidence type="ECO:0000256" key="3">
    <source>
        <dbReference type="SAM" id="MobiDB-lite"/>
    </source>
</evidence>
<evidence type="ECO:0000269" key="4">
    <source>
    </source>
</evidence>
<evidence type="ECO:0000269" key="5">
    <source>
    </source>
</evidence>
<evidence type="ECO:0000269" key="6">
    <source>
    </source>
</evidence>
<evidence type="ECO:0000305" key="7"/>
<evidence type="ECO:0000312" key="8">
    <source>
        <dbReference type="EMBL" id="AAF79232.1"/>
    </source>
</evidence>
<evidence type="ECO:0000312" key="9">
    <source>
        <dbReference type="EMBL" id="AEE29240.1"/>
    </source>
</evidence>
<evidence type="ECO:0000312" key="10">
    <source>
        <dbReference type="EMBL" id="CAA67564.1"/>
    </source>
</evidence>